<keyword id="KW-1064">Adaptive immunity</keyword>
<keyword id="KW-0175">Coiled coil</keyword>
<keyword id="KW-0963">Cytoplasm</keyword>
<keyword id="KW-0391">Immunity</keyword>
<keyword id="KW-0399">Innate immunity</keyword>
<keyword id="KW-1017">Isopeptide bond</keyword>
<keyword id="KW-0479">Metal-binding</keyword>
<keyword id="KW-0597">Phosphoprotein</keyword>
<keyword id="KW-1185">Reference proteome</keyword>
<keyword id="KW-0832">Ubl conjugation</keyword>
<keyword id="KW-0862">Zinc</keyword>
<evidence type="ECO:0000250" key="1">
    <source>
        <dbReference type="UniProtKB" id="Q9EPY0"/>
    </source>
</evidence>
<evidence type="ECO:0000250" key="2">
    <source>
        <dbReference type="UniProtKB" id="Q9H257"/>
    </source>
</evidence>
<evidence type="ECO:0000255" key="3"/>
<evidence type="ECO:0000255" key="4">
    <source>
        <dbReference type="PROSITE-ProRule" id="PRU00046"/>
    </source>
</evidence>
<evidence type="ECO:0000256" key="5">
    <source>
        <dbReference type="SAM" id="MobiDB-lite"/>
    </source>
</evidence>
<evidence type="ECO:0000269" key="6">
    <source>
    </source>
</evidence>
<evidence type="ECO:0000269" key="7">
    <source>
    </source>
</evidence>
<evidence type="ECO:0000269" key="8">
    <source>
    </source>
</evidence>
<evidence type="ECO:0000269" key="9">
    <source>
    </source>
</evidence>
<evidence type="ECO:0000269" key="10">
    <source>
    </source>
</evidence>
<evidence type="ECO:0000269" key="11">
    <source>
    </source>
</evidence>
<evidence type="ECO:0000269" key="12">
    <source>
    </source>
</evidence>
<evidence type="ECO:0000269" key="13">
    <source>
    </source>
</evidence>
<evidence type="ECO:0000269" key="14">
    <source>
    </source>
</evidence>
<evidence type="ECO:0000269" key="15">
    <source>
    </source>
</evidence>
<evidence type="ECO:0000269" key="16">
    <source>
    </source>
</evidence>
<evidence type="ECO:0000269" key="17">
    <source>
    </source>
</evidence>
<evidence type="ECO:0000269" key="18">
    <source>
    </source>
</evidence>
<evidence type="ECO:0000269" key="19">
    <source>
    </source>
</evidence>
<evidence type="ECO:0000269" key="20">
    <source>
    </source>
</evidence>
<evidence type="ECO:0000269" key="21">
    <source>
    </source>
</evidence>
<evidence type="ECO:0000269" key="22">
    <source>
    </source>
</evidence>
<evidence type="ECO:0000303" key="23">
    <source>
    </source>
</evidence>
<evidence type="ECO:0000312" key="24">
    <source>
        <dbReference type="MGI" id="MGI:2685628"/>
    </source>
</evidence>
<evidence type="ECO:0007744" key="25">
    <source>
    </source>
</evidence>
<dbReference type="EMBL" id="AL732541">
    <property type="status" value="NOT_ANNOTATED_CDS"/>
    <property type="molecule type" value="Genomic_DNA"/>
</dbReference>
<dbReference type="EMBL" id="BC151023">
    <property type="protein sequence ID" value="AAI51024.1"/>
    <property type="molecule type" value="mRNA"/>
</dbReference>
<dbReference type="CCDS" id="CCDS38084.1"/>
<dbReference type="RefSeq" id="NP_001032836.1">
    <property type="nucleotide sequence ID" value="NM_001037747.3"/>
</dbReference>
<dbReference type="SMR" id="A2AIV8"/>
<dbReference type="BioGRID" id="237136">
    <property type="interactions" value="3"/>
</dbReference>
<dbReference type="CORUM" id="A2AIV8"/>
<dbReference type="FunCoup" id="A2AIV8">
    <property type="interactions" value="39"/>
</dbReference>
<dbReference type="IntAct" id="A2AIV8">
    <property type="interactions" value="1"/>
</dbReference>
<dbReference type="MINT" id="A2AIV8"/>
<dbReference type="STRING" id="10090.ENSMUSP00000097876"/>
<dbReference type="iPTMnet" id="A2AIV8"/>
<dbReference type="PhosphoSitePlus" id="A2AIV8"/>
<dbReference type="jPOST" id="A2AIV8"/>
<dbReference type="PaxDb" id="10090-ENSMUSP00000097876"/>
<dbReference type="PeptideAtlas" id="A2AIV8"/>
<dbReference type="ProteomicsDB" id="265665"/>
<dbReference type="Pumba" id="A2AIV8"/>
<dbReference type="Antibodypedia" id="18695">
    <property type="antibodies" value="277 antibodies from 40 providers"/>
</dbReference>
<dbReference type="DNASU" id="332579"/>
<dbReference type="Ensembl" id="ENSMUST00000028294.7">
    <property type="protein sequence ID" value="ENSMUSP00000028294.7"/>
    <property type="gene ID" value="ENSMUSG00000026928.15"/>
</dbReference>
<dbReference type="Ensembl" id="ENSMUST00000100303.10">
    <property type="protein sequence ID" value="ENSMUSP00000097876.4"/>
    <property type="gene ID" value="ENSMUSG00000026928.15"/>
</dbReference>
<dbReference type="GeneID" id="332579"/>
<dbReference type="KEGG" id="mmu:332579"/>
<dbReference type="UCSC" id="uc008iut.1">
    <property type="organism name" value="mouse"/>
</dbReference>
<dbReference type="AGR" id="MGI:2685628"/>
<dbReference type="CTD" id="64170"/>
<dbReference type="MGI" id="MGI:2685628">
    <property type="gene designation" value="Card9"/>
</dbReference>
<dbReference type="VEuPathDB" id="HostDB:ENSMUSG00000026928"/>
<dbReference type="eggNOG" id="ENOG502R00K">
    <property type="taxonomic scope" value="Eukaryota"/>
</dbReference>
<dbReference type="GeneTree" id="ENSGT00940000160570"/>
<dbReference type="HOGENOM" id="CLU_038057_1_0_1"/>
<dbReference type="InParanoid" id="A2AIV8"/>
<dbReference type="OMA" id="HEVDWEN"/>
<dbReference type="OrthoDB" id="8868836at2759"/>
<dbReference type="PhylomeDB" id="A2AIV8"/>
<dbReference type="TreeFam" id="TF351139"/>
<dbReference type="Reactome" id="R-MMU-5607764">
    <property type="pathway name" value="CLEC7A (Dectin-1) signaling"/>
</dbReference>
<dbReference type="BioGRID-ORCS" id="332579">
    <property type="hits" value="0 hits in 75 CRISPR screens"/>
</dbReference>
<dbReference type="PRO" id="PR:A2AIV8"/>
<dbReference type="Proteomes" id="UP000000589">
    <property type="component" value="Chromosome 2"/>
</dbReference>
<dbReference type="RNAct" id="A2AIV8">
    <property type="molecule type" value="protein"/>
</dbReference>
<dbReference type="Bgee" id="ENSMUSG00000026928">
    <property type="expression patterns" value="Expressed in granulocyte and 59 other cell types or tissues"/>
</dbReference>
<dbReference type="GO" id="GO:0032449">
    <property type="term" value="C:CBM complex"/>
    <property type="evidence" value="ECO:0000314"/>
    <property type="project" value="UniProtKB"/>
</dbReference>
<dbReference type="GO" id="GO:0005829">
    <property type="term" value="C:cytosol"/>
    <property type="evidence" value="ECO:0000304"/>
    <property type="project" value="Reactome"/>
</dbReference>
<dbReference type="GO" id="GO:0050700">
    <property type="term" value="F:CARD domain binding"/>
    <property type="evidence" value="ECO:0000353"/>
    <property type="project" value="UniProtKB"/>
</dbReference>
<dbReference type="GO" id="GO:0046872">
    <property type="term" value="F:metal ion binding"/>
    <property type="evidence" value="ECO:0007669"/>
    <property type="project" value="UniProtKB-KW"/>
</dbReference>
<dbReference type="GO" id="GO:0042803">
    <property type="term" value="F:protein homodimerization activity"/>
    <property type="evidence" value="ECO:0007669"/>
    <property type="project" value="Ensembl"/>
</dbReference>
<dbReference type="GO" id="GO:0035591">
    <property type="term" value="F:signaling adaptor activity"/>
    <property type="evidence" value="ECO:0007669"/>
    <property type="project" value="Ensembl"/>
</dbReference>
<dbReference type="GO" id="GO:0061760">
    <property type="term" value="P:antifungal innate immune response"/>
    <property type="evidence" value="ECO:0000314"/>
    <property type="project" value="UniProtKB"/>
</dbReference>
<dbReference type="GO" id="GO:0097190">
    <property type="term" value="P:apoptotic signaling pathway"/>
    <property type="evidence" value="ECO:0007669"/>
    <property type="project" value="Ensembl"/>
</dbReference>
<dbReference type="GO" id="GO:0050830">
    <property type="term" value="P:defense response to Gram-positive bacterium"/>
    <property type="evidence" value="ECO:0000315"/>
    <property type="project" value="MGI"/>
</dbReference>
<dbReference type="GO" id="GO:0051607">
    <property type="term" value="P:defense response to virus"/>
    <property type="evidence" value="ECO:0000315"/>
    <property type="project" value="MGI"/>
</dbReference>
<dbReference type="GO" id="GO:0048874">
    <property type="term" value="P:host-mediated regulation of intestinal microbiota composition"/>
    <property type="evidence" value="ECO:0000315"/>
    <property type="project" value="UniProtKB"/>
</dbReference>
<dbReference type="GO" id="GO:0016064">
    <property type="term" value="P:immunoglobulin mediated immune response"/>
    <property type="evidence" value="ECO:0000315"/>
    <property type="project" value="UniProtKB"/>
</dbReference>
<dbReference type="GO" id="GO:0007254">
    <property type="term" value="P:JNK cascade"/>
    <property type="evidence" value="ECO:0000315"/>
    <property type="project" value="MGI"/>
</dbReference>
<dbReference type="GO" id="GO:0002446">
    <property type="term" value="P:neutrophil mediated immunity"/>
    <property type="evidence" value="ECO:0000315"/>
    <property type="project" value="UniProtKB"/>
</dbReference>
<dbReference type="GO" id="GO:0043123">
    <property type="term" value="P:positive regulation of canonical NF-kappaB signal transduction"/>
    <property type="evidence" value="ECO:0007669"/>
    <property type="project" value="Ensembl"/>
</dbReference>
<dbReference type="GO" id="GO:0032722">
    <property type="term" value="P:positive regulation of chemokine production"/>
    <property type="evidence" value="ECO:0000315"/>
    <property type="project" value="UniProtKB"/>
</dbReference>
<dbReference type="GO" id="GO:0001819">
    <property type="term" value="P:positive regulation of cytokine production"/>
    <property type="evidence" value="ECO:0000314"/>
    <property type="project" value="UniProtKB"/>
</dbReference>
<dbReference type="GO" id="GO:1900017">
    <property type="term" value="P:positive regulation of cytokine production involved in inflammatory response"/>
    <property type="evidence" value="ECO:0000315"/>
    <property type="project" value="UniProtKB"/>
</dbReference>
<dbReference type="GO" id="GO:0070374">
    <property type="term" value="P:positive regulation of ERK1 and ERK2 cascade"/>
    <property type="evidence" value="ECO:0000315"/>
    <property type="project" value="UniProtKB"/>
</dbReference>
<dbReference type="GO" id="GO:0032725">
    <property type="term" value="P:positive regulation of granulocyte macrophage colony-stimulating factor production"/>
    <property type="evidence" value="ECO:0000250"/>
    <property type="project" value="UniProtKB"/>
</dbReference>
<dbReference type="GO" id="GO:0045089">
    <property type="term" value="P:positive regulation of innate immune response"/>
    <property type="evidence" value="ECO:0000315"/>
    <property type="project" value="MGI"/>
</dbReference>
<dbReference type="GO" id="GO:0032740">
    <property type="term" value="P:positive regulation of interleukin-17 production"/>
    <property type="evidence" value="ECO:0000250"/>
    <property type="project" value="UniProtKB"/>
</dbReference>
<dbReference type="GO" id="GO:0032755">
    <property type="term" value="P:positive regulation of interleukin-6 production"/>
    <property type="evidence" value="ECO:0000315"/>
    <property type="project" value="MGI"/>
</dbReference>
<dbReference type="GO" id="GO:0046330">
    <property type="term" value="P:positive regulation of JNK cascade"/>
    <property type="evidence" value="ECO:0000315"/>
    <property type="project" value="MGI"/>
</dbReference>
<dbReference type="GO" id="GO:0060907">
    <property type="term" value="P:positive regulation of macrophage cytokine production"/>
    <property type="evidence" value="ECO:0000315"/>
    <property type="project" value="MGI"/>
</dbReference>
<dbReference type="GO" id="GO:0051092">
    <property type="term" value="P:positive regulation of NF-kappaB transcription factor activity"/>
    <property type="evidence" value="ECO:0000314"/>
    <property type="project" value="UniProtKB"/>
</dbReference>
<dbReference type="GO" id="GO:0032874">
    <property type="term" value="P:positive regulation of stress-activated MAPK cascade"/>
    <property type="evidence" value="ECO:0000315"/>
    <property type="project" value="UniProtKB"/>
</dbReference>
<dbReference type="GO" id="GO:2000318">
    <property type="term" value="P:positive regulation of T-helper 17 type immune response"/>
    <property type="evidence" value="ECO:0000315"/>
    <property type="project" value="UniProtKB"/>
</dbReference>
<dbReference type="GO" id="GO:0032760">
    <property type="term" value="P:positive regulation of tumor necrosis factor production"/>
    <property type="evidence" value="ECO:0000315"/>
    <property type="project" value="MGI"/>
</dbReference>
<dbReference type="GO" id="GO:0051260">
    <property type="term" value="P:protein homooligomerization"/>
    <property type="evidence" value="ECO:0000250"/>
    <property type="project" value="UniProtKB"/>
</dbReference>
<dbReference type="GO" id="GO:0042981">
    <property type="term" value="P:regulation of apoptotic process"/>
    <property type="evidence" value="ECO:0007669"/>
    <property type="project" value="InterPro"/>
</dbReference>
<dbReference type="GO" id="GO:0032663">
    <property type="term" value="P:regulation of interleukin-2 production"/>
    <property type="evidence" value="ECO:0000315"/>
    <property type="project" value="MGI"/>
</dbReference>
<dbReference type="GO" id="GO:0032675">
    <property type="term" value="P:regulation of interleukin-6 production"/>
    <property type="evidence" value="ECO:0000315"/>
    <property type="project" value="MGI"/>
</dbReference>
<dbReference type="GO" id="GO:0032680">
    <property type="term" value="P:regulation of tumor necrosis factor production"/>
    <property type="evidence" value="ECO:0000315"/>
    <property type="project" value="MGI"/>
</dbReference>
<dbReference type="GO" id="GO:1904044">
    <property type="term" value="P:response to aldosterone"/>
    <property type="evidence" value="ECO:0007669"/>
    <property type="project" value="Ensembl"/>
</dbReference>
<dbReference type="GO" id="GO:0043330">
    <property type="term" value="P:response to exogenous dsRNA"/>
    <property type="evidence" value="ECO:0000315"/>
    <property type="project" value="MGI"/>
</dbReference>
<dbReference type="GO" id="GO:0009620">
    <property type="term" value="P:response to fungus"/>
    <property type="evidence" value="ECO:0000315"/>
    <property type="project" value="MGI"/>
</dbReference>
<dbReference type="GO" id="GO:0032495">
    <property type="term" value="P:response to muramyl dipeptide"/>
    <property type="evidence" value="ECO:0000315"/>
    <property type="project" value="MGI"/>
</dbReference>
<dbReference type="GO" id="GO:0032494">
    <property type="term" value="P:response to peptidoglycan"/>
    <property type="evidence" value="ECO:0000315"/>
    <property type="project" value="MGI"/>
</dbReference>
<dbReference type="GO" id="GO:0009410">
    <property type="term" value="P:response to xenobiotic stimulus"/>
    <property type="evidence" value="ECO:0000315"/>
    <property type="project" value="MGI"/>
</dbReference>
<dbReference type="GO" id="GO:0051403">
    <property type="term" value="P:stress-activated MAPK cascade"/>
    <property type="evidence" value="ECO:0000315"/>
    <property type="project" value="MGI"/>
</dbReference>
<dbReference type="CDD" id="cd08809">
    <property type="entry name" value="CARD_CARD9"/>
    <property type="match status" value="1"/>
</dbReference>
<dbReference type="FunFam" id="1.10.533.10:FF:000003">
    <property type="entry name" value="Caspase recruitment domain family, member 11"/>
    <property type="match status" value="1"/>
</dbReference>
<dbReference type="Gene3D" id="1.10.533.10">
    <property type="entry name" value="Death Domain, Fas"/>
    <property type="match status" value="1"/>
</dbReference>
<dbReference type="InterPro" id="IPR001315">
    <property type="entry name" value="CARD"/>
</dbReference>
<dbReference type="InterPro" id="IPR042142">
    <property type="entry name" value="CARD_CARD9"/>
</dbReference>
<dbReference type="InterPro" id="IPR011029">
    <property type="entry name" value="DEATH-like_dom_sf"/>
</dbReference>
<dbReference type="PANTHER" id="PTHR14559">
    <property type="entry name" value="CASPASE RECRUITMENT DOMAIN FAMILY"/>
    <property type="match status" value="1"/>
</dbReference>
<dbReference type="PANTHER" id="PTHR14559:SF3">
    <property type="entry name" value="CASPASE RECRUITMENT DOMAIN-CONTAINING PROTEIN 9"/>
    <property type="match status" value="1"/>
</dbReference>
<dbReference type="Pfam" id="PF00619">
    <property type="entry name" value="CARD"/>
    <property type="match status" value="1"/>
</dbReference>
<dbReference type="SUPFAM" id="SSF47986">
    <property type="entry name" value="DEATH domain"/>
    <property type="match status" value="1"/>
</dbReference>
<dbReference type="PROSITE" id="PS50209">
    <property type="entry name" value="CARD"/>
    <property type="match status" value="1"/>
</dbReference>
<name>CARD9_MOUSE</name>
<comment type="function">
    <text evidence="6 7 8 9 10 11 13 15 16 17 18 19 20 21 22">Adapter protein that plays a key role in innate immune response against fungi by forming signaling complexes downstream of C-type lectin receptors (PubMed:16862125, PubMed:20538615, PubMed:26679537, PubMed:29080677). CARD9-mediated signals are essential for antifungal immunity against a subset of fungi from the phylum Ascomycota (PubMed:16862125, PubMed:20538615, PubMed:24470469, PubMed:25621893, PubMed:26679537, PubMed:29080677, PubMed:32548948). Transduces signals in myeloid cells downstream of C-type lectin receptors CLEC7A (dectin-1), CLEC6A (dectin-2) and CLEC4E (Mincle), which detect pathogen-associated molecular pattern metabolites (PAMPs), such as fungal carbohydrates, and trigger CARD9 activation (PubMed:16862125, PubMed:20538615). Upon activation, CARD9 homooligomerizes to form a nucleating helical template that recruits BCL10 via CARD-CARD interaction, thereby promoting polymerization of BCL10 and subsequent recruitment of MALT1: this leads to activation of NF-kappa-B and MAP kinase p38 (MAPK11, MAPK12, MAPK13 and/or MAPK14) pathways which stimulate expression of genes encoding pro-inflammatory cytokines and chemokines (PubMed:16862125, PubMed:20538615, PubMed:22265677, PubMed:29080677). CARD9 signaling in antigen-presenting cells links innate sensing of fungi to the activation of adaptive immunity and provides a cytokine milieu that induces the development and subsequent of interleukin 17-producing T helper (Th17) cells (PubMed:17450144, PubMed:24470469, PubMed:32358020). Also involved in activation of myeloid cells via classical ITAM-associated receptors and TLR: required for TLR-mediated activation of MAPK, while it is not required for TLR-induced activation of NF-kappa-B (PubMed:17486093). CARD9 can also be engaged independently of BCL10: forms a complex with RASGRF1 downstream of C-type lectin receptors, which recruits and activates HRAS, leading to ERK activation and the production of cytokines (PubMed:25267792). Acts as an important regulator of the intestinal commensal fungi (mycobiota) component of the gut microbiota (PubMed:27158904, PubMed:33548172). Plays an essential role in antifungal immunity against dissemination of gut fungi: acts by promoting induction of antifungal IgG antibodies response in CX3CR1(+) macrophages to confer protection against disseminated C.albicans or C.auris infection (PubMed:33548172). Also mediates immunity against other pathogens, such as certain bacteria, viruses and parasites; CARD9 signaling is however redundant with other innate immune responses (PubMed:17187069, PubMed:26679537, PubMed:29080677). In response to L.monocytogenes infection, required for the production of inflammatory cytokines activated by intracellular peptidoglycan: acts by connecting NOD2 recognition of peptidoglycan to downstream activation of MAP kinases (MAPK) without activating NF-kappa-B (PubMed:17187069).</text>
</comment>
<comment type="activity regulation">
    <text evidence="2 11">Maintained in an autoinhibited state via homodimerization in which the CARD domain forms an extensive interaction with the adjacent linker and coiled-coil regions (By similarity). Activation downstream of C-type lectin receptors, by phosphorylation by PRKCD and/or ubiquitination by TRIM62, triggers disruption of the CARD domain-coiled coil interface, CARD9 homooligomerization and BCL10 recruitment, followed by activation of NF-kappa-B and MAP kinase p38 pathways (PubMed:22265677). Zinc-binding inhibits activation by stabilizing the CARD ground-state conformation and restricting its capacity to form BCL10-nucleating filaments (By similarity).</text>
</comment>
<comment type="subunit">
    <text evidence="1 2 7 11 14">Monomer (By similarity). Homodimer; homodimerization is mediated by the CARD domain which forms an extensive interaction with the adjacent linker and coiled-coil regions; leads to an autoinhibited state (By similarity). Homomultimer; polymerizes following activation, forming a nucleating helical template that seeds BCL10-filament formation via a CARD-CARD interaction (By similarity). Interacts (via CARD domain) with BCL10 (via CARD domain); interaction takes place following CARD9 activation and polymerization, leading to the formation of a filamentous CBM complex assembly (PubMed:22265677). Component of a CBM complex (CARD9-BCL10, MALT1), composed of CARD9, BCL10 and MALT1 (PubMed:22265677). Interacts with RASGRF1 (By similarity). Interacts with NOD2 (via NACHT domain); interaction is direct (PubMed:17187069, PubMed:24960071). Interacts with RIPK2 (PubMed:17187069). Interacts with VHL; without leading to protein degradation (By similarity).</text>
</comment>
<comment type="subcellular location">
    <subcellularLocation>
        <location evidence="2">Cytoplasm</location>
    </subcellularLocation>
</comment>
<comment type="tissue specificity">
    <text evidence="6 7">Specifically expressed in myeloid cells (PubMed:16862125, PubMed:17187069). Not expressed in non-lymphoid organs (PubMed:16862125, PubMed:17187069).</text>
</comment>
<comment type="domain">
    <text evidence="2">The linker region, also named autoinhibitory interface, is required to prevent constitutive activation and maintain CARD9 in an autoinhibitory state. Disruption of this region triggers polymerization and activation, leading to formation of BCL10-nucleating filaments.</text>
</comment>
<comment type="PTM">
    <text evidence="1 11">Phosphorylated at Thr-231 by PRKCD downstream of C-type lectin receptors activation: phosphorylation promotes interaction with BCL10, followed by activation of NF-kappa-B and MAP kinase p38 pathways (PubMed:22265677). Phosphorylated at Thr-531 and Thr-531 by CK2 following interaction with VHL, leading to inhibit the ability to activate NF-kappa-B (By similarity).</text>
</comment>
<comment type="PTM">
    <text evidence="2">Ubiquitinated at Lys-125 via 'Lys-27'-linked ubiquitin by TRIM62 downstream of C-type lectin receptors activation; leading to CARD9 activation, followed by activation of NF-kappa-B and MAP kinase p38 pathways (By similarity). Deubiquitinated at Lys-125 by USP15, inhibiting CARD9 (By similarity).</text>
</comment>
<comment type="disruption phenotype">
    <text evidence="6 7 12 13 16 17 18 19 21 22">Mice were born at the normal Mendelian ratio without obvious anatomical defects but display impaired innate immunity (PubMed:16862125, PubMed:17187069). In response to C.albicans infection, mice develop fungal infections, many of which target the central nervous system (CNS) (PubMed:26679537). All mice die within 5 days after infection by C.albicans whereas more than half of the control mice survive for more than 12 days (PubMed:16862125). Impaired zymosan-induced cytokine production (PubMed:16862125). No defects in adaptive immunity (PubMed:16862125). Mice show impaired recruitment of neutrophils in CNS after infection by C.albicans, an immune cell critical for antifungal host defense (PubMed:26679537). Mice are susceptible to pulmonary infection with C.neoformans and show decreased Th17-related immune response (PubMed:24470469). Mice are highly susceptible to phaeohyphomycosis following E.spinifera infection and show impaired antifungal immunity, characterized by reduced cytokine production and neutrophil recruitment (PubMed:29080677). Mice are susceptible to A.fumigatus and P.pneumonia infection (PubMed:25621893, PubMed:32548948). Mice are more susceptible to colitis and have an increased load of gut-resident fungi (mycobiota), causing gut fungal dysbiosis (PubMed:23732773, PubMed:27158904). Mice are unable to induce an efficient IgG antibody response against disseminated C.albicans infection (PubMed:33548172). Following infection by L.monocytogenes, mice fail to clear infection and show altered cytokine production (PubMed:17187069).</text>
</comment>
<accession>A2AIV8</accession>
<feature type="chain" id="PRO_0000428725" description="Caspase recruitment domain-containing protein 9">
    <location>
        <begin position="1"/>
        <end position="536"/>
    </location>
</feature>
<feature type="domain" description="CARD" evidence="4">
    <location>
        <begin position="6"/>
        <end position="98"/>
    </location>
</feature>
<feature type="region of interest" description="Linker" evidence="2">
    <location>
        <begin position="99"/>
        <end position="116"/>
    </location>
</feature>
<feature type="region of interest" description="Disordered" evidence="5">
    <location>
        <begin position="425"/>
        <end position="451"/>
    </location>
</feature>
<feature type="region of interest" description="Disordered" evidence="5">
    <location>
        <begin position="476"/>
        <end position="536"/>
    </location>
</feature>
<feature type="coiled-coil region" evidence="3">
    <location>
        <begin position="117"/>
        <end position="272"/>
    </location>
</feature>
<feature type="coiled-coil region" evidence="3">
    <location>
        <begin position="303"/>
        <end position="415"/>
    </location>
</feature>
<feature type="compositionally biased region" description="Basic and acidic residues" evidence="5">
    <location>
        <begin position="487"/>
        <end position="502"/>
    </location>
</feature>
<feature type="binding site" evidence="2">
    <location>
        <position position="3"/>
    </location>
    <ligand>
        <name>Zn(2+)</name>
        <dbReference type="ChEBI" id="CHEBI:29105"/>
    </ligand>
</feature>
<feature type="binding site" evidence="2">
    <location>
        <position position="10"/>
    </location>
    <ligand>
        <name>Zn(2+)</name>
        <dbReference type="ChEBI" id="CHEBI:29105"/>
    </ligand>
</feature>
<feature type="binding site" evidence="2">
    <location>
        <position position="73"/>
    </location>
    <ligand>
        <name>Zn(2+)</name>
        <dbReference type="ChEBI" id="CHEBI:29105"/>
    </ligand>
</feature>
<feature type="modified residue" description="Phosphoserine" evidence="1">
    <location>
        <position position="2"/>
    </location>
</feature>
<feature type="modified residue" description="Phosphothreonine; by PKC/PRKCD" evidence="11">
    <location>
        <position position="231"/>
    </location>
</feature>
<feature type="modified residue" description="Phosphoserine" evidence="2">
    <location>
        <position position="277"/>
    </location>
</feature>
<feature type="modified residue" description="Phosphoserine" evidence="1">
    <location>
        <position position="424"/>
    </location>
</feature>
<feature type="modified residue" description="Phosphoserine" evidence="2">
    <location>
        <position position="425"/>
    </location>
</feature>
<feature type="modified residue" description="Phosphoserine" evidence="25">
    <location>
        <position position="431"/>
    </location>
</feature>
<feature type="modified residue" description="Phosphoserine" evidence="1">
    <location>
        <position position="451"/>
    </location>
</feature>
<feature type="modified residue" description="Phosphoserine" evidence="25">
    <location>
        <position position="461"/>
    </location>
</feature>
<feature type="modified residue" description="Phosphoserine" evidence="2">
    <location>
        <position position="483"/>
    </location>
</feature>
<feature type="modified residue" description="Phosphoserine" evidence="2">
    <location>
        <position position="498"/>
    </location>
</feature>
<feature type="modified residue" description="Phosphothreonine; by CK2" evidence="1">
    <location>
        <position position="531"/>
    </location>
</feature>
<feature type="modified residue" description="Phosphothreonine; by CK2" evidence="1">
    <location>
        <position position="533"/>
    </location>
</feature>
<feature type="cross-link" description="Glycyl lysine isopeptide (Lys-Gly) (interchain with G-Cter in ubiquitin)" evidence="2">
    <location>
        <position position="125"/>
    </location>
</feature>
<feature type="mutagenesis site" description="Reduced phosphorylation by PKC/PRKCD, leading to impaired interaction with BCL10 and decreased activation of NF-kappa-B and MAP kinase p38 pathways." evidence="11">
    <original>T</original>
    <variation>A</variation>
    <location>
        <position position="231"/>
    </location>
</feature>
<feature type="mutagenesis site" description="Does not affect phosphorylation by PKC/PRKCD." evidence="11">
    <original>S</original>
    <variation>A</variation>
    <location>
        <position position="303"/>
    </location>
</feature>
<reference key="1">
    <citation type="journal article" date="2009" name="PLoS Biol.">
        <title>Lineage-specific biology revealed by a finished genome assembly of the mouse.</title>
        <authorList>
            <person name="Church D.M."/>
            <person name="Goodstadt L."/>
            <person name="Hillier L.W."/>
            <person name="Zody M.C."/>
            <person name="Goldstein S."/>
            <person name="She X."/>
            <person name="Bult C.J."/>
            <person name="Agarwala R."/>
            <person name="Cherry J.L."/>
            <person name="DiCuccio M."/>
            <person name="Hlavina W."/>
            <person name="Kapustin Y."/>
            <person name="Meric P."/>
            <person name="Maglott D."/>
            <person name="Birtle Z."/>
            <person name="Marques A.C."/>
            <person name="Graves T."/>
            <person name="Zhou S."/>
            <person name="Teague B."/>
            <person name="Potamousis K."/>
            <person name="Churas C."/>
            <person name="Place M."/>
            <person name="Herschleb J."/>
            <person name="Runnheim R."/>
            <person name="Forrest D."/>
            <person name="Amos-Landgraf J."/>
            <person name="Schwartz D.C."/>
            <person name="Cheng Z."/>
            <person name="Lindblad-Toh K."/>
            <person name="Eichler E.E."/>
            <person name="Ponting C.P."/>
        </authorList>
    </citation>
    <scope>NUCLEOTIDE SEQUENCE [LARGE SCALE GENOMIC DNA]</scope>
    <source>
        <strain>C57BL/6J</strain>
    </source>
</reference>
<reference key="2">
    <citation type="journal article" date="2004" name="Genome Res.">
        <title>The status, quality, and expansion of the NIH full-length cDNA project: the Mammalian Gene Collection (MGC).</title>
        <authorList>
            <consortium name="The MGC Project Team"/>
        </authorList>
    </citation>
    <scope>NUCLEOTIDE SEQUENCE [LARGE SCALE MRNA]</scope>
</reference>
<reference key="3">
    <citation type="journal article" date="2006" name="Nature">
        <title>Card9 controls a non-TLR signalling pathway for innate anti-fungal immunity.</title>
        <authorList>
            <person name="Gross O."/>
            <person name="Gewies A."/>
            <person name="Finger K."/>
            <person name="Schafer M."/>
            <person name="Sparwasser T."/>
            <person name="Peschel C."/>
            <person name="Forster I."/>
            <person name="Ruland J."/>
        </authorList>
    </citation>
    <scope>FUNCTION</scope>
    <scope>TISSUE SPECIFICITY</scope>
    <scope>DISRUPTION PHENOTYPE</scope>
</reference>
<reference key="4">
    <citation type="journal article" date="2007" name="Nat. Immunol.">
        <title>The adaptor protein CARD9 is required for innate immune responses to intracellular pathogens.</title>
        <authorList>
            <person name="Hsu Y.M."/>
            <person name="Zhang Y."/>
            <person name="You Y."/>
            <person name="Wang D."/>
            <person name="Li H."/>
            <person name="Duramad O."/>
            <person name="Qin X.F."/>
            <person name="Dong C."/>
            <person name="Lin X."/>
        </authorList>
    </citation>
    <scope>FUNCTION</scope>
    <scope>TISSUE SPECIFICITY</scope>
    <scope>DISRUPTION PHENOTYPE</scope>
    <scope>INTERACTION WITH NOD2 AND RIPK2</scope>
</reference>
<reference key="5">
    <citation type="journal article" date="2007" name="Nat. Immunol.">
        <title>All roads lead to CARD9.</title>
        <authorList>
            <person name="Colonna M."/>
        </authorList>
    </citation>
    <scope>REVIEW</scope>
</reference>
<reference key="6">
    <citation type="journal article" date="2007" name="Nat. Immunol.">
        <title>The adaptor protein CARD9 is essential for the activation of myeloid cells through ITAM-associated and Toll-like receptors.</title>
        <authorList>
            <person name="Hara H."/>
            <person name="Ishihara C."/>
            <person name="Takeuchi A."/>
            <person name="Imanishi T."/>
            <person name="Xue L."/>
            <person name="Morris S.W."/>
            <person name="Inui M."/>
            <person name="Takai T."/>
            <person name="Shibuya A."/>
            <person name="Saijo S."/>
            <person name="Iwakura Y."/>
            <person name="Ohno N."/>
            <person name="Koseki H."/>
            <person name="Yoshida H."/>
            <person name="Penninger J.M."/>
            <person name="Saito T."/>
        </authorList>
    </citation>
    <scope>FUNCTION</scope>
</reference>
<reference key="7">
    <citation type="journal article" date="2007" name="Nat. Immunol.">
        <title>Syk- and CARD9-dependent coupling of innate immunity to the induction of T helper cells that produce interleukin 17.</title>
        <authorList>
            <person name="LeibundGut-Landmann S."/>
            <person name="Gross O."/>
            <person name="Robinson M.J."/>
            <person name="Osorio F."/>
            <person name="Slack E.C."/>
            <person name="Tsoni S.V."/>
            <person name="Schweighoffer E."/>
            <person name="Tybulewicz V."/>
            <person name="Brown G.D."/>
            <person name="Ruland J."/>
            <person name="Reis e Sousa C."/>
        </authorList>
    </citation>
    <scope>FUNCTION</scope>
</reference>
<reference key="8">
    <citation type="journal article" date="2010" name="Cell">
        <title>A tissue-specific atlas of mouse protein phosphorylation and expression.</title>
        <authorList>
            <person name="Huttlin E.L."/>
            <person name="Jedrychowski M.P."/>
            <person name="Elias J.E."/>
            <person name="Goswami T."/>
            <person name="Rad R."/>
            <person name="Beausoleil S.A."/>
            <person name="Villen J."/>
            <person name="Haas W."/>
            <person name="Sowa M.E."/>
            <person name="Gygi S.P."/>
        </authorList>
    </citation>
    <scope>PHOSPHORYLATION [LARGE SCALE ANALYSIS] AT SER-431 AND SER-461</scope>
    <scope>IDENTIFICATION BY MASS SPECTROMETRY [LARGE SCALE ANALYSIS]</scope>
    <source>
        <tissue>Brain</tissue>
        <tissue>Spleen</tissue>
        <tissue>Testis</tissue>
    </source>
</reference>
<reference key="9">
    <citation type="journal article" date="2010" name="J. Biol. Chem.">
        <title>CARD9 mediates dectin-2-induced IkappaBalpha kinase ubiquitination leading to activation of NF-kappaB in response to stimulation by the hyphal form of Candida albicans.</title>
        <authorList>
            <person name="Bi L."/>
            <person name="Gojestani S."/>
            <person name="Wu W."/>
            <person name="Hsu Y.M."/>
            <person name="Zhu J."/>
            <person name="Ariizumi K."/>
            <person name="Lin X."/>
        </authorList>
    </citation>
    <scope>FUNCTION</scope>
</reference>
<reference key="10">
    <citation type="journal article" date="2012" name="Immunity">
        <title>Syk kinase-coupled C-type lectin receptors engage protein kinase C-delta to elicit Card9 adaptor-mediated innate immunity.</title>
        <authorList>
            <person name="Strasser D."/>
            <person name="Neumann K."/>
            <person name="Bergmann H."/>
            <person name="Marakalala M.J."/>
            <person name="Guler R."/>
            <person name="Rojowska A."/>
            <person name="Hopfner K.P."/>
            <person name="Brombacher F."/>
            <person name="Urlaub H."/>
            <person name="Baier G."/>
            <person name="Brown G.D."/>
            <person name="Leitges M."/>
            <person name="Ruland J."/>
        </authorList>
    </citation>
    <scope>PHOSPHORYLATION AT THR-231</scope>
    <scope>FUNCTION</scope>
    <scope>ACTIVITY REGULATION</scope>
    <scope>INTERACTION WITH BCL10</scope>
    <scope>MUTAGENESIS OF THR-231 AND SER-303</scope>
</reference>
<reference key="11">
    <citation type="journal article" date="2013" name="Gastroenterology">
        <title>Card9 mediates intestinal epithelial cell restitution, T-helper 17 responses, and control of bacterial infection in mice.</title>
        <authorList>
            <person name="Sokol H."/>
            <person name="Conway K.L."/>
            <person name="Zhang M."/>
            <person name="Choi M."/>
            <person name="Morin B."/>
            <person name="Cao Z."/>
            <person name="Villablanca E.J."/>
            <person name="Li C."/>
            <person name="Wijmenga C."/>
            <person name="Yun S.H."/>
            <person name="Shi H.N."/>
            <person name="Xavier R.J."/>
        </authorList>
    </citation>
    <scope>DISRUPTION PHENOTYPE</scope>
</reference>
<reference key="12">
    <citation type="journal article" date="2014" name="FEBS Lett.">
        <title>Interaction between NOD2 and CARD9 involves the NOD2 NACHT and the linker region between the NOD2 CARDs and NACHT domain.</title>
        <authorList>
            <person name="Parkhouse R."/>
            <person name="Boyle J.P."/>
            <person name="Mayle S."/>
            <person name="Sawmynaden K."/>
            <person name="Rittinger K."/>
            <person name="Monie T.P."/>
        </authorList>
    </citation>
    <scope>INTERACTION WITH NOD2</scope>
</reference>
<reference key="13">
    <citation type="journal article" date="2014" name="Infect. Immun.">
        <title>Defect of CARD9 leads to impaired accumulation of gamma interferon-producing memory phenotype T cells in lungs and increased susceptibility to pulmonary infection with Cryptococcus neoformans.</title>
        <authorList>
            <person name="Yamamoto H."/>
            <person name="Nakamura Y."/>
            <person name="Sato K."/>
            <person name="Takahashi Y."/>
            <person name="Nomura T."/>
            <person name="Miyasaka T."/>
            <person name="Ishii K."/>
            <person name="Hara H."/>
            <person name="Yamamoto N."/>
            <person name="Kanno E."/>
            <person name="Iwakura Y."/>
            <person name="Kawakami K."/>
        </authorList>
    </citation>
    <scope>FUNCTION</scope>
    <scope>DISRUPTION PHENOTYPE</scope>
</reference>
<reference key="14">
    <citation type="journal article" date="2014" name="J. Exp. Med.">
        <title>CARD9 mediates Dectin-1-induced ERK activation by linking Ras-GRF1 to H-Ras for antifungal immunity.</title>
        <authorList>
            <person name="Jia X.M."/>
            <person name="Tang B."/>
            <person name="Zhu L.L."/>
            <person name="Liu Y.H."/>
            <person name="Zhao X.Q."/>
            <person name="Gorjestani S."/>
            <person name="Hsu Y.M."/>
            <person name="Yang L."/>
            <person name="Guan J.H."/>
            <person name="Xu G.T."/>
            <person name="Lin X."/>
        </authorList>
    </citation>
    <scope>FUNCTION</scope>
</reference>
<reference key="15">
    <citation type="journal article" date="2015" name="PLoS Pathog.">
        <title>Compartment-specific and sequential role of MyD88 and CARD9 in chemokine induction and innate defense during respiratory fungal infection.</title>
        <authorList>
            <person name="Jhingran A."/>
            <person name="Kasahara S."/>
            <person name="Shepardson K.M."/>
            <person name="Junecko B.A."/>
            <person name="Heung L.J."/>
            <person name="Kumasaka D.K."/>
            <person name="Knoblaugh S.E."/>
            <person name="Lin X."/>
            <person name="Kazmierczak B.I."/>
            <person name="Reinhart T.A."/>
            <person name="Cramer R.A."/>
            <person name="Hohl T.M."/>
        </authorList>
    </citation>
    <scope>FUNCTION</scope>
    <scope>DISRUPTION PHENOTYPE</scope>
</reference>
<reference key="16">
    <citation type="journal article" date="2015" name="PLoS Pathog.">
        <title>CARD9-dependent neutrophil recruitment protects against fungal invasion of the central nervous system.</title>
        <authorList>
            <person name="Drummond R.A."/>
            <person name="Collar A.L."/>
            <person name="Swamydas M."/>
            <person name="Rodriguez C.A."/>
            <person name="Lim J.K."/>
            <person name="Mendez L.M."/>
            <person name="Fink D.L."/>
            <person name="Hsu A.P."/>
            <person name="Zhai B."/>
            <person name="Karauzum H."/>
            <person name="Mikelis C.M."/>
            <person name="Rose S.R."/>
            <person name="Ferre E.M."/>
            <person name="Yockey L."/>
            <person name="Lemberg K."/>
            <person name="Kuehn H.S."/>
            <person name="Rosenzweig S.D."/>
            <person name="Lin X."/>
            <person name="Chittiboina P."/>
            <person name="Datta S.K."/>
            <person name="Belhorn T.H."/>
            <person name="Weimer E.T."/>
            <person name="Hernandez M.L."/>
            <person name="Hohl T.M."/>
            <person name="Kuhns D.B."/>
            <person name="Lionakis M.S."/>
        </authorList>
    </citation>
    <scope>FUNCTION</scope>
    <scope>DISRUPTION PHENOTYPE</scope>
</reference>
<reference key="17">
    <citation type="journal article" date="2016" name="Nat. Med.">
        <title>CARD9 impacts colitis by altering gut microbiota metabolism of tryptophan into aryl hydrocarbon receptor ligands.</title>
        <authorList>
            <person name="Lamas B."/>
            <person name="Richard M.L."/>
            <person name="Leducq V."/>
            <person name="Pham H.P."/>
            <person name="Michel M.L."/>
            <person name="Da Costa G."/>
            <person name="Bridonneau C."/>
            <person name="Jegou S."/>
            <person name="Hoffmann T.W."/>
            <person name="Natividad J.M."/>
            <person name="Brot L."/>
            <person name="Taleb S."/>
            <person name="Couturier-Maillard A."/>
            <person name="Nion-Larmurier I."/>
            <person name="Merabtene F."/>
            <person name="Seksik P."/>
            <person name="Bourrier A."/>
            <person name="Cosnes J."/>
            <person name="Ryffel B."/>
            <person name="Beaugerie L."/>
            <person name="Launay J.M."/>
            <person name="Langella P."/>
            <person name="Xavier R.J."/>
            <person name="Sokol H."/>
        </authorList>
    </citation>
    <scope>FUNCTION</scope>
    <scope>DISRUPTION PHENOTYPE</scope>
</reference>
<reference key="18">
    <citation type="journal article" date="2018" name="J. Invest. Dermatol.">
        <title>Impaired specific antifungal immunity in CARD9-deficient patients with phaeohyphomycosis.</title>
        <authorList>
            <person name="Wang X."/>
            <person name="Zhang R."/>
            <person name="Wu W."/>
            <person name="Song Y."/>
            <person name="Wan Z."/>
            <person name="Han W."/>
            <person name="Li R."/>
        </authorList>
    </citation>
    <scope>FUNCTION</scope>
    <scope>DISRUPTION PHENOTYPE</scope>
</reference>
<reference key="19">
    <citation type="journal article" date="2020" name="Cell. Microbiol.">
        <title>A critical role for CARD9 in pneumocystis pneumonia host defence.</title>
        <authorList>
            <person name="Kottom T.J."/>
            <person name="Nandakumar V."/>
            <person name="Hebrink D.M."/>
            <person name="Carmona E.M."/>
            <person name="Limper A.H."/>
        </authorList>
    </citation>
    <scope>FUNCTION</scope>
    <scope>DISRUPTION PHENOTYPE</scope>
</reference>
<reference key="20">
    <citation type="journal article" date="2020" name="J. Immunol.">
        <title>CARD9-associated Dectin-1 and Dectin-2 are required for protective immunity of a multivalent vaccine against coccidioides posadasii infection.</title>
        <authorList>
            <person name="Campuzano A."/>
            <person name="Zhang H."/>
            <person name="Ostroff G.R."/>
            <person name="Dos Santos Dias L."/>
            <person name="Wuethrich M."/>
            <person name="Klein B.S."/>
            <person name="Yu J.J."/>
            <person name="Lara H.H."/>
            <person name="Lopez-Ribot J.L."/>
            <person name="Hung C.Y."/>
        </authorList>
    </citation>
    <scope>FUNCTION</scope>
</reference>
<reference key="21">
    <citation type="journal article" date="2021" name="Cell">
        <title>Human gut mycobiota tune immunity via CARD9-dependent induction of anti-fungal IgG antibodies.</title>
        <authorList>
            <person name="Doron I."/>
            <person name="Leonardi I."/>
            <person name="Li X.V."/>
            <person name="Fiers W.D."/>
            <person name="Semon A."/>
            <person name="Bialt-DeCelie M."/>
            <person name="Migaud M."/>
            <person name="Gao I.H."/>
            <person name="Lin W.Y."/>
            <person name="Kusakabe T."/>
            <person name="Puel A."/>
            <person name="Iliev I.D."/>
        </authorList>
    </citation>
    <scope>FUNCTION</scope>
    <scope>DISRUPTION PHENOTYPE</scope>
</reference>
<protein>
    <recommendedName>
        <fullName evidence="23">Caspase recruitment domain-containing protein 9</fullName>
    </recommendedName>
</protein>
<organism>
    <name type="scientific">Mus musculus</name>
    <name type="common">Mouse</name>
    <dbReference type="NCBI Taxonomy" id="10090"/>
    <lineage>
        <taxon>Eukaryota</taxon>
        <taxon>Metazoa</taxon>
        <taxon>Chordata</taxon>
        <taxon>Craniata</taxon>
        <taxon>Vertebrata</taxon>
        <taxon>Euteleostomi</taxon>
        <taxon>Mammalia</taxon>
        <taxon>Eutheria</taxon>
        <taxon>Euarchontoglires</taxon>
        <taxon>Glires</taxon>
        <taxon>Rodentia</taxon>
        <taxon>Myomorpha</taxon>
        <taxon>Muroidea</taxon>
        <taxon>Muridae</taxon>
        <taxon>Murinae</taxon>
        <taxon>Mus</taxon>
        <taxon>Mus</taxon>
    </lineage>
</organism>
<gene>
    <name evidence="23 24" type="primary">Card9</name>
</gene>
<proteinExistence type="evidence at protein level"/>
<sequence>MSDYENDDECWSTLESFRVKLISVIDPSRITPYLRQCKVLNPDDEEQVLSDPNLVIRKRKVGVLLDILQRTGHKGYVAFLESLELYYPQLYRKVTGKEPARVFSMIIDASGESGLTQLLMTEVMKLQKKVQDLTALLSSKDDFIKELRVKDSLLRKHQERVQRLKEECELSSAELKRCKDENYELAMCLAHLSEEKGAALMRNRDLQLEVDRLRHSLMKAEDDCKVERKHTLKLRHAMEQRPSQELLWELQQEKDLLQARVQELQVSVQEGKLDRNSPYIQVLEEDWRQALQEHQKQVSTIFSLRKDLRQAETLRARCTEEKEMFELQCLALRKDAKMYKDRIEAILLQMEEVSIERDQAMASREELHAQCTQSFQDKDKLRKLVRELGEKADELQLQLFQTESRLLAAEGRLKQQQLDMLILSSDLEDSSPRNSQELSLPQDLEEDAQLSDKGVLADRESPEQPFMALNKEHLSLTHGMGPSSSEPPEKERRRLKESFENYRRKRALRKMQNSWRQGEGDRGNTTGSDNTDTEGS</sequence>